<name>F16PA_HALHL</name>
<protein>
    <recommendedName>
        <fullName evidence="1">Fructose-1,6-bisphosphatase class 1</fullName>
        <shortName evidence="1">FBPase class 1</shortName>
        <ecNumber evidence="1">3.1.3.11</ecNumber>
    </recommendedName>
    <alternativeName>
        <fullName evidence="1">D-fructose-1,6-bisphosphate 1-phosphohydrolase class 1</fullName>
    </alternativeName>
</protein>
<proteinExistence type="inferred from homology"/>
<evidence type="ECO:0000255" key="1">
    <source>
        <dbReference type="HAMAP-Rule" id="MF_01855"/>
    </source>
</evidence>
<comment type="catalytic activity">
    <reaction evidence="1">
        <text>beta-D-fructose 1,6-bisphosphate + H2O = beta-D-fructose 6-phosphate + phosphate</text>
        <dbReference type="Rhea" id="RHEA:11064"/>
        <dbReference type="ChEBI" id="CHEBI:15377"/>
        <dbReference type="ChEBI" id="CHEBI:32966"/>
        <dbReference type="ChEBI" id="CHEBI:43474"/>
        <dbReference type="ChEBI" id="CHEBI:57634"/>
        <dbReference type="EC" id="3.1.3.11"/>
    </reaction>
</comment>
<comment type="cofactor">
    <cofactor evidence="1">
        <name>Mg(2+)</name>
        <dbReference type="ChEBI" id="CHEBI:18420"/>
    </cofactor>
    <text evidence="1">Binds 2 magnesium ions per subunit.</text>
</comment>
<comment type="pathway">
    <text evidence="1">Carbohydrate biosynthesis; gluconeogenesis.</text>
</comment>
<comment type="subunit">
    <text evidence="1">Homotetramer.</text>
</comment>
<comment type="subcellular location">
    <subcellularLocation>
        <location evidence="1">Cytoplasm</location>
    </subcellularLocation>
</comment>
<comment type="similarity">
    <text evidence="1">Belongs to the FBPase class 1 family.</text>
</comment>
<accession>A1WZH0</accession>
<organism>
    <name type="scientific">Halorhodospira halophila (strain DSM 244 / SL1)</name>
    <name type="common">Ectothiorhodospira halophila (strain DSM 244 / SL1)</name>
    <dbReference type="NCBI Taxonomy" id="349124"/>
    <lineage>
        <taxon>Bacteria</taxon>
        <taxon>Pseudomonadati</taxon>
        <taxon>Pseudomonadota</taxon>
        <taxon>Gammaproteobacteria</taxon>
        <taxon>Chromatiales</taxon>
        <taxon>Ectothiorhodospiraceae</taxon>
        <taxon>Halorhodospira</taxon>
    </lineage>
</organism>
<reference key="1">
    <citation type="submission" date="2006-12" db="EMBL/GenBank/DDBJ databases">
        <title>Complete sequence of Halorhodospira halophila SL1.</title>
        <authorList>
            <consortium name="US DOE Joint Genome Institute"/>
            <person name="Copeland A."/>
            <person name="Lucas S."/>
            <person name="Lapidus A."/>
            <person name="Barry K."/>
            <person name="Detter J.C."/>
            <person name="Glavina del Rio T."/>
            <person name="Hammon N."/>
            <person name="Israni S."/>
            <person name="Dalin E."/>
            <person name="Tice H."/>
            <person name="Pitluck S."/>
            <person name="Saunders E."/>
            <person name="Brettin T."/>
            <person name="Bruce D."/>
            <person name="Han C."/>
            <person name="Tapia R."/>
            <person name="Schmutz J."/>
            <person name="Larimer F."/>
            <person name="Land M."/>
            <person name="Hauser L."/>
            <person name="Kyrpides N."/>
            <person name="Mikhailova N."/>
            <person name="Hoff W."/>
            <person name="Richardson P."/>
        </authorList>
    </citation>
    <scope>NUCLEOTIDE SEQUENCE [LARGE SCALE GENOMIC DNA]</scope>
    <source>
        <strain>DSM 244 / SL1</strain>
    </source>
</reference>
<keyword id="KW-0119">Carbohydrate metabolism</keyword>
<keyword id="KW-0963">Cytoplasm</keyword>
<keyword id="KW-0378">Hydrolase</keyword>
<keyword id="KW-0460">Magnesium</keyword>
<keyword id="KW-0479">Metal-binding</keyword>
<keyword id="KW-1185">Reference proteome</keyword>
<gene>
    <name evidence="1" type="primary">fbp</name>
    <name type="ordered locus">Hhal_2319</name>
</gene>
<dbReference type="EC" id="3.1.3.11" evidence="1"/>
<dbReference type="EMBL" id="CP000544">
    <property type="protein sequence ID" value="ABM63082.1"/>
    <property type="molecule type" value="Genomic_DNA"/>
</dbReference>
<dbReference type="RefSeq" id="WP_011815104.1">
    <property type="nucleotide sequence ID" value="NC_008789.1"/>
</dbReference>
<dbReference type="SMR" id="A1WZH0"/>
<dbReference type="STRING" id="349124.Hhal_2319"/>
<dbReference type="KEGG" id="hha:Hhal_2319"/>
<dbReference type="eggNOG" id="COG0158">
    <property type="taxonomic scope" value="Bacteria"/>
</dbReference>
<dbReference type="HOGENOM" id="CLU_039977_0_0_6"/>
<dbReference type="OrthoDB" id="9806756at2"/>
<dbReference type="UniPathway" id="UPA00138"/>
<dbReference type="Proteomes" id="UP000000647">
    <property type="component" value="Chromosome"/>
</dbReference>
<dbReference type="GO" id="GO:0005829">
    <property type="term" value="C:cytosol"/>
    <property type="evidence" value="ECO:0007669"/>
    <property type="project" value="TreeGrafter"/>
</dbReference>
<dbReference type="GO" id="GO:0042132">
    <property type="term" value="F:fructose 1,6-bisphosphate 1-phosphatase activity"/>
    <property type="evidence" value="ECO:0007669"/>
    <property type="project" value="UniProtKB-UniRule"/>
</dbReference>
<dbReference type="GO" id="GO:0000287">
    <property type="term" value="F:magnesium ion binding"/>
    <property type="evidence" value="ECO:0007669"/>
    <property type="project" value="UniProtKB-UniRule"/>
</dbReference>
<dbReference type="GO" id="GO:0030388">
    <property type="term" value="P:fructose 1,6-bisphosphate metabolic process"/>
    <property type="evidence" value="ECO:0007669"/>
    <property type="project" value="TreeGrafter"/>
</dbReference>
<dbReference type="GO" id="GO:0006002">
    <property type="term" value="P:fructose 6-phosphate metabolic process"/>
    <property type="evidence" value="ECO:0007669"/>
    <property type="project" value="TreeGrafter"/>
</dbReference>
<dbReference type="GO" id="GO:0006000">
    <property type="term" value="P:fructose metabolic process"/>
    <property type="evidence" value="ECO:0007669"/>
    <property type="project" value="TreeGrafter"/>
</dbReference>
<dbReference type="GO" id="GO:0006094">
    <property type="term" value="P:gluconeogenesis"/>
    <property type="evidence" value="ECO:0007669"/>
    <property type="project" value="UniProtKB-UniRule"/>
</dbReference>
<dbReference type="GO" id="GO:0005986">
    <property type="term" value="P:sucrose biosynthetic process"/>
    <property type="evidence" value="ECO:0007669"/>
    <property type="project" value="TreeGrafter"/>
</dbReference>
<dbReference type="CDD" id="cd00354">
    <property type="entry name" value="FBPase"/>
    <property type="match status" value="1"/>
</dbReference>
<dbReference type="FunFam" id="3.30.540.10:FF:000002">
    <property type="entry name" value="Fructose-1,6-bisphosphatase class 1"/>
    <property type="match status" value="1"/>
</dbReference>
<dbReference type="FunFam" id="3.40.190.80:FF:000011">
    <property type="entry name" value="Fructose-1,6-bisphosphatase class 1"/>
    <property type="match status" value="1"/>
</dbReference>
<dbReference type="Gene3D" id="3.40.190.80">
    <property type="match status" value="1"/>
</dbReference>
<dbReference type="Gene3D" id="3.30.540.10">
    <property type="entry name" value="Fructose-1,6-Bisphosphatase, subunit A, domain 1"/>
    <property type="match status" value="1"/>
</dbReference>
<dbReference type="HAMAP" id="MF_01855">
    <property type="entry name" value="FBPase_class1"/>
    <property type="match status" value="1"/>
</dbReference>
<dbReference type="InterPro" id="IPR044015">
    <property type="entry name" value="FBPase_C_dom"/>
</dbReference>
<dbReference type="InterPro" id="IPR000146">
    <property type="entry name" value="FBPase_class-1"/>
</dbReference>
<dbReference type="InterPro" id="IPR033391">
    <property type="entry name" value="FBPase_N"/>
</dbReference>
<dbReference type="InterPro" id="IPR028343">
    <property type="entry name" value="FBPtase"/>
</dbReference>
<dbReference type="NCBIfam" id="NF006778">
    <property type="entry name" value="PRK09293.1-1"/>
    <property type="match status" value="1"/>
</dbReference>
<dbReference type="NCBIfam" id="NF006779">
    <property type="entry name" value="PRK09293.1-3"/>
    <property type="match status" value="1"/>
</dbReference>
<dbReference type="NCBIfam" id="NF006780">
    <property type="entry name" value="PRK09293.1-4"/>
    <property type="match status" value="1"/>
</dbReference>
<dbReference type="PANTHER" id="PTHR11556">
    <property type="entry name" value="FRUCTOSE-1,6-BISPHOSPHATASE-RELATED"/>
    <property type="match status" value="1"/>
</dbReference>
<dbReference type="PANTHER" id="PTHR11556:SF35">
    <property type="entry name" value="SEDOHEPTULOSE-1,7-BISPHOSPHATASE, CHLOROPLASTIC"/>
    <property type="match status" value="1"/>
</dbReference>
<dbReference type="Pfam" id="PF00316">
    <property type="entry name" value="FBPase"/>
    <property type="match status" value="1"/>
</dbReference>
<dbReference type="Pfam" id="PF18913">
    <property type="entry name" value="FBPase_C"/>
    <property type="match status" value="1"/>
</dbReference>
<dbReference type="PIRSF" id="PIRSF500210">
    <property type="entry name" value="FBPtase"/>
    <property type="match status" value="1"/>
</dbReference>
<dbReference type="PIRSF" id="PIRSF000904">
    <property type="entry name" value="FBPtase_SBPase"/>
    <property type="match status" value="1"/>
</dbReference>
<dbReference type="PRINTS" id="PR00115">
    <property type="entry name" value="F16BPHPHTASE"/>
</dbReference>
<dbReference type="SUPFAM" id="SSF56655">
    <property type="entry name" value="Carbohydrate phosphatase"/>
    <property type="match status" value="1"/>
</dbReference>
<sequence>MHIGTTLTNYIIETQRNLPEATGEFTGLLNDISVACKRIADLVNKGDLVGMLGSADSENVQGETQKKLDVVTNEVFIEALTQNGHIAGLVSEEMDDIYTLPNPSQRGRYLLLCDPLDGSSNIDVNVSVGTIFSIVRAPQGSENPSAGDFLQHGTEQVAAGYCLYGPSTILVLAVKGQGVQMFTLNRDFGEFILTRKDVQIPEDTQEFAINVSNQRHWEEPVQRYIDECLQGKEGPRGQDFNMRWVASMVAEVHRILCRGGVFMYPLDAKIKAKGQNGRLRLMYEANPMSLIVEQAGGGATTGRQRILELDPSDIHERAPVVLGSRNEVERIARYHQEG</sequence>
<feature type="chain" id="PRO_0000364571" description="Fructose-1,6-bisphosphatase class 1">
    <location>
        <begin position="1"/>
        <end position="338"/>
    </location>
</feature>
<feature type="binding site" evidence="1">
    <location>
        <position position="92"/>
    </location>
    <ligand>
        <name>Mg(2+)</name>
        <dbReference type="ChEBI" id="CHEBI:18420"/>
        <label>1</label>
    </ligand>
</feature>
<feature type="binding site" evidence="1">
    <location>
        <position position="114"/>
    </location>
    <ligand>
        <name>Mg(2+)</name>
        <dbReference type="ChEBI" id="CHEBI:18420"/>
        <label>1</label>
    </ligand>
</feature>
<feature type="binding site" evidence="1">
    <location>
        <position position="114"/>
    </location>
    <ligand>
        <name>Mg(2+)</name>
        <dbReference type="ChEBI" id="CHEBI:18420"/>
        <label>2</label>
    </ligand>
</feature>
<feature type="binding site" evidence="1">
    <location>
        <position position="116"/>
    </location>
    <ligand>
        <name>Mg(2+)</name>
        <dbReference type="ChEBI" id="CHEBI:18420"/>
        <label>1</label>
    </ligand>
</feature>
<feature type="binding site" evidence="1">
    <location>
        <begin position="117"/>
        <end position="120"/>
    </location>
    <ligand>
        <name>substrate</name>
    </ligand>
</feature>
<feature type="binding site" evidence="1">
    <location>
        <position position="117"/>
    </location>
    <ligand>
        <name>Mg(2+)</name>
        <dbReference type="ChEBI" id="CHEBI:18420"/>
        <label>2</label>
    </ligand>
</feature>
<feature type="binding site" evidence="1">
    <location>
        <position position="210"/>
    </location>
    <ligand>
        <name>substrate</name>
    </ligand>
</feature>
<feature type="binding site" evidence="1">
    <location>
        <position position="284"/>
    </location>
    <ligand>
        <name>Mg(2+)</name>
        <dbReference type="ChEBI" id="CHEBI:18420"/>
        <label>2</label>
    </ligand>
</feature>